<comment type="function">
    <text evidence="1">ATPase required for the post-translational delivery of tail-anchored (TA) proteins to the endoplasmic reticulum. Recognizes and selectively binds the transmembrane domain of TA proteins in the cytosol. This complex then targets to the endoplasmic reticulum by membrane-bound receptors, where the tail-anchored protein is released for insertion. This process is regulated by ATP binding and hydrolysis. ATP binding drives the homodimer towards the closed dimer state, facilitating recognition of newly synthesized TA membrane proteins. ATP hydrolysis is required for insertion. Subsequently, the homodimer reverts towards the open dimer state, lowering its affinity for the membrane-bound receptor, and returning it to the cytosol to initiate a new round of targeting.</text>
</comment>
<comment type="subunit">
    <text evidence="1">Homodimer.</text>
</comment>
<comment type="subcellular location">
    <subcellularLocation>
        <location evidence="1">Cytoplasm</location>
    </subcellularLocation>
    <subcellularLocation>
        <location evidence="1">Endoplasmic reticulum</location>
    </subcellularLocation>
</comment>
<comment type="similarity">
    <text evidence="1">Belongs to the arsA ATPase family.</text>
</comment>
<sequence length="406" mass="43651">MDPTLTELLHSNLQWIFVGGKGGVGKTTTSCALATLFATTPISDAAAPDGTRPRRVLLISTDPAHNLSDAFNQRFGPQPTPVKGLEDTLAAMEVDPKNFTHGALMSSLTGANSGGSASSLSREAEADAVEQTASFARIGAVLKEAARTMPGIDEISVFAEILHYVRTLSYDLLIFDTAPTGHTLRLLALPQTLNSTFDRLMSLEGLAPMLEAASHLIGSSLGAVGGDSVSGCEVATAMPSSSSTAPGAGSAATGSSQGSWSITADEVRAKALHWRQVMEEVQDRFNDPSRTSFVCVCIAEFLSVYETERLVQELMKYNIGCDSIVVNQLVLKPSSEPPCRMCAARQKIQTKYLEQIDLLYDDFHVVKMPLLSDEVRGIPALKMFARFLQEPYNPDTHGYIDVQESC</sequence>
<proteinExistence type="inferred from homology"/>
<keyword id="KW-0067">ATP-binding</keyword>
<keyword id="KW-0963">Cytoplasm</keyword>
<keyword id="KW-0256">Endoplasmic reticulum</keyword>
<keyword id="KW-0378">Hydrolase</keyword>
<keyword id="KW-0479">Metal-binding</keyword>
<keyword id="KW-0547">Nucleotide-binding</keyword>
<keyword id="KW-1185">Reference proteome</keyword>
<keyword id="KW-0813">Transport</keyword>
<keyword id="KW-0862">Zinc</keyword>
<reference key="1">
    <citation type="journal article" date="2007" name="Nat. Genet.">
        <title>Comparative genomic analysis of three Leishmania species that cause diverse human disease.</title>
        <authorList>
            <person name="Peacock C.S."/>
            <person name="Seeger K."/>
            <person name="Harris D."/>
            <person name="Murphy L."/>
            <person name="Ruiz J.C."/>
            <person name="Quail M.A."/>
            <person name="Peters N."/>
            <person name="Adlem E."/>
            <person name="Tivey A."/>
            <person name="Aslett M."/>
            <person name="Kerhornou A."/>
            <person name="Ivens A."/>
            <person name="Fraser A."/>
            <person name="Rajandream M.-A."/>
            <person name="Carver T."/>
            <person name="Norbertczak H."/>
            <person name="Chillingworth T."/>
            <person name="Hance Z."/>
            <person name="Jagels K."/>
            <person name="Moule S."/>
            <person name="Ormond D."/>
            <person name="Rutter S."/>
            <person name="Sqaures R."/>
            <person name="Whitehead S."/>
            <person name="Rabbinowitsch E."/>
            <person name="Arrowsmith C."/>
            <person name="White B."/>
            <person name="Thurston S."/>
            <person name="Bringaud F."/>
            <person name="Baldauf S.L."/>
            <person name="Faulconbridge A."/>
            <person name="Jeffares D."/>
            <person name="Depledge D.P."/>
            <person name="Oyola S.O."/>
            <person name="Hilley J.D."/>
            <person name="Brito L.O."/>
            <person name="Tosi L.R.O."/>
            <person name="Barrell B."/>
            <person name="Cruz A.K."/>
            <person name="Mottram J.C."/>
            <person name="Smith D.F."/>
            <person name="Berriman M."/>
        </authorList>
    </citation>
    <scope>NUCLEOTIDE SEQUENCE [LARGE SCALE GENOMIC DNA]</scope>
    <source>
        <strain>MHOM/BR/75/M2904</strain>
    </source>
</reference>
<dbReference type="EC" id="3.6.-.-" evidence="1"/>
<dbReference type="EMBL" id="FR798985">
    <property type="protein sequence ID" value="CAM41949.1"/>
    <property type="molecule type" value="Genomic_DNA"/>
</dbReference>
<dbReference type="RefSeq" id="XP_001562982.1">
    <property type="nucleotide sequence ID" value="XM_001562932.1"/>
</dbReference>
<dbReference type="SMR" id="A4H6J5"/>
<dbReference type="FunCoup" id="A4H6J5">
    <property type="interactions" value="405"/>
</dbReference>
<dbReference type="STRING" id="5660.A4H6J5"/>
<dbReference type="GeneID" id="5413473"/>
<dbReference type="KEGG" id="lbz:LBRM_11_0490"/>
<dbReference type="VEuPathDB" id="TriTrypDB:LbrM.11.0490"/>
<dbReference type="InParanoid" id="A4H6J5"/>
<dbReference type="OMA" id="MDAPYEF"/>
<dbReference type="Proteomes" id="UP000007258">
    <property type="component" value="Chromosome 11"/>
</dbReference>
<dbReference type="GO" id="GO:0043529">
    <property type="term" value="C:GET complex"/>
    <property type="evidence" value="ECO:0007669"/>
    <property type="project" value="TreeGrafter"/>
</dbReference>
<dbReference type="GO" id="GO:0005524">
    <property type="term" value="F:ATP binding"/>
    <property type="evidence" value="ECO:0007669"/>
    <property type="project" value="UniProtKB-UniRule"/>
</dbReference>
<dbReference type="GO" id="GO:0016887">
    <property type="term" value="F:ATP hydrolysis activity"/>
    <property type="evidence" value="ECO:0007669"/>
    <property type="project" value="InterPro"/>
</dbReference>
<dbReference type="GO" id="GO:0046872">
    <property type="term" value="F:metal ion binding"/>
    <property type="evidence" value="ECO:0007669"/>
    <property type="project" value="UniProtKB-KW"/>
</dbReference>
<dbReference type="GO" id="GO:0071816">
    <property type="term" value="P:tail-anchored membrane protein insertion into ER membrane"/>
    <property type="evidence" value="ECO:0007669"/>
    <property type="project" value="TreeGrafter"/>
</dbReference>
<dbReference type="CDD" id="cd02035">
    <property type="entry name" value="ArsA"/>
    <property type="match status" value="1"/>
</dbReference>
<dbReference type="Gene3D" id="3.40.50.300">
    <property type="entry name" value="P-loop containing nucleotide triphosphate hydrolases"/>
    <property type="match status" value="1"/>
</dbReference>
<dbReference type="HAMAP" id="MF_03112">
    <property type="entry name" value="Asna1_Get3"/>
    <property type="match status" value="1"/>
</dbReference>
<dbReference type="InterPro" id="IPR025723">
    <property type="entry name" value="Anion-transp_ATPase-like_dom"/>
</dbReference>
<dbReference type="InterPro" id="IPR016300">
    <property type="entry name" value="ATPase_ArsA/GET3"/>
</dbReference>
<dbReference type="InterPro" id="IPR027542">
    <property type="entry name" value="ATPase_ArsA/GET3_euk"/>
</dbReference>
<dbReference type="InterPro" id="IPR027417">
    <property type="entry name" value="P-loop_NTPase"/>
</dbReference>
<dbReference type="NCBIfam" id="TIGR00345">
    <property type="entry name" value="GET3_arsA_TRC40"/>
    <property type="match status" value="1"/>
</dbReference>
<dbReference type="PANTHER" id="PTHR10803">
    <property type="entry name" value="ARSENICAL PUMP-DRIVING ATPASE ARSENITE-TRANSLOCATING ATPASE"/>
    <property type="match status" value="1"/>
</dbReference>
<dbReference type="PANTHER" id="PTHR10803:SF3">
    <property type="entry name" value="ATPASE GET3"/>
    <property type="match status" value="1"/>
</dbReference>
<dbReference type="Pfam" id="PF02374">
    <property type="entry name" value="ArsA_ATPase"/>
    <property type="match status" value="2"/>
</dbReference>
<dbReference type="SUPFAM" id="SSF52540">
    <property type="entry name" value="P-loop containing nucleoside triphosphate hydrolases"/>
    <property type="match status" value="1"/>
</dbReference>
<feature type="chain" id="PRO_0000388177" description="ATPase ASNA1 homolog">
    <location>
        <begin position="1"/>
        <end position="406"/>
    </location>
</feature>
<feature type="active site" evidence="1">
    <location>
        <position position="62"/>
    </location>
</feature>
<feature type="binding site" evidence="1">
    <location>
        <begin position="21"/>
        <end position="28"/>
    </location>
    <ligand>
        <name>ATP</name>
        <dbReference type="ChEBI" id="CHEBI:30616"/>
    </ligand>
</feature>
<feature type="binding site" evidence="1">
    <location>
        <position position="300"/>
    </location>
    <ligand>
        <name>ATP</name>
        <dbReference type="ChEBI" id="CHEBI:30616"/>
    </ligand>
</feature>
<feature type="binding site" evidence="1">
    <location>
        <position position="327"/>
    </location>
    <ligand>
        <name>ATP</name>
        <dbReference type="ChEBI" id="CHEBI:30616"/>
    </ligand>
</feature>
<feature type="binding site" evidence="1">
    <location>
        <position position="339"/>
    </location>
    <ligand>
        <name>Zn(2+)</name>
        <dbReference type="ChEBI" id="CHEBI:29105"/>
        <note>ligand shared between dimeric partners</note>
    </ligand>
</feature>
<feature type="binding site" evidence="1">
    <location>
        <position position="342"/>
    </location>
    <ligand>
        <name>Zn(2+)</name>
        <dbReference type="ChEBI" id="CHEBI:29105"/>
        <note>ligand shared between dimeric partners</note>
    </ligand>
</feature>
<organism>
    <name type="scientific">Leishmania braziliensis</name>
    <dbReference type="NCBI Taxonomy" id="5660"/>
    <lineage>
        <taxon>Eukaryota</taxon>
        <taxon>Discoba</taxon>
        <taxon>Euglenozoa</taxon>
        <taxon>Kinetoplastea</taxon>
        <taxon>Metakinetoplastina</taxon>
        <taxon>Trypanosomatida</taxon>
        <taxon>Trypanosomatidae</taxon>
        <taxon>Leishmaniinae</taxon>
        <taxon>Leishmania</taxon>
        <taxon>Leishmania braziliensis species complex</taxon>
    </lineage>
</organism>
<evidence type="ECO:0000255" key="1">
    <source>
        <dbReference type="HAMAP-Rule" id="MF_03112"/>
    </source>
</evidence>
<gene>
    <name type="ORF">LbrM11_V2.0490</name>
    <name type="ORF">LbrM_11_0490</name>
</gene>
<accession>A4H6J5</accession>
<name>ASNA_LEIBR</name>
<protein>
    <recommendedName>
        <fullName evidence="1">ATPase ASNA1 homolog</fullName>
        <ecNumber evidence="1">3.6.-.-</ecNumber>
    </recommendedName>
    <alternativeName>
        <fullName evidence="1">Arsenical pump-driving ATPase homolog</fullName>
    </alternativeName>
    <alternativeName>
        <fullName evidence="1">Arsenite-stimulated ATPase</fullName>
    </alternativeName>
</protein>